<accession>Q5I0I2</accession>
<name>MARH2_RAT</name>
<proteinExistence type="evidence at protein level"/>
<sequence>MTTGDCCHLPGSLCDCSSSPAFSKVVEATGLGPPQYVAQVTSRDGRLLSTVIRALDTPSDCPFCRICHEGANGENLLSPCGCTGTLGAVHKSCLEKWLSSSNTSYCELCHTEFAVEKRPRPLTEWLKDPGPRTEKRTLCCDMVCFVFITPLAAISGWLCLRGAQDHLRLHSRLEAVGLIALTIALFTIYVLWTLVSFRYHCQLYSEWRKTNQKVRLKIREADGSEDPHHSLLATGLLKKVAEETPV</sequence>
<keyword id="KW-1003">Cell membrane</keyword>
<keyword id="KW-0963">Cytoplasm</keyword>
<keyword id="KW-0254">Endocytosis</keyword>
<keyword id="KW-0256">Endoplasmic reticulum</keyword>
<keyword id="KW-0967">Endosome</keyword>
<keyword id="KW-0333">Golgi apparatus</keyword>
<keyword id="KW-0458">Lysosome</keyword>
<keyword id="KW-0472">Membrane</keyword>
<keyword id="KW-0479">Metal-binding</keyword>
<keyword id="KW-1185">Reference proteome</keyword>
<keyword id="KW-0808">Transferase</keyword>
<keyword id="KW-0812">Transmembrane</keyword>
<keyword id="KW-1133">Transmembrane helix</keyword>
<keyword id="KW-0833">Ubl conjugation pathway</keyword>
<keyword id="KW-0862">Zinc</keyword>
<keyword id="KW-0863">Zinc-finger</keyword>
<dbReference type="EC" id="2.3.2.27" evidence="1"/>
<dbReference type="EMBL" id="AB048838">
    <property type="protein sequence ID" value="BAD89357.1"/>
    <property type="molecule type" value="mRNA"/>
</dbReference>
<dbReference type="EMBL" id="BC088286">
    <property type="protein sequence ID" value="AAH88286.1"/>
    <property type="molecule type" value="mRNA"/>
</dbReference>
<dbReference type="RefSeq" id="NP_001029280.1">
    <property type="nucleotide sequence ID" value="NM_001034108.1"/>
</dbReference>
<dbReference type="SMR" id="Q5I0I2"/>
<dbReference type="BioGRID" id="263774">
    <property type="interactions" value="7"/>
</dbReference>
<dbReference type="FunCoup" id="Q5I0I2">
    <property type="interactions" value="73"/>
</dbReference>
<dbReference type="STRING" id="10116.ENSRNOP00000010399"/>
<dbReference type="PhosphoSitePlus" id="Q5I0I2"/>
<dbReference type="PaxDb" id="10116-ENSRNOP00000010399"/>
<dbReference type="Ensembl" id="ENSRNOT00000010399.8">
    <property type="protein sequence ID" value="ENSRNOP00000010399.5"/>
    <property type="gene ID" value="ENSRNOG00000007769.8"/>
</dbReference>
<dbReference type="GeneID" id="362849"/>
<dbReference type="KEGG" id="rno:362849"/>
<dbReference type="UCSC" id="RGD:1306395">
    <property type="organism name" value="rat"/>
</dbReference>
<dbReference type="AGR" id="RGD:1306395"/>
<dbReference type="CTD" id="51257"/>
<dbReference type="RGD" id="1306395">
    <property type="gene designation" value="Marchf2"/>
</dbReference>
<dbReference type="eggNOG" id="KOG1609">
    <property type="taxonomic scope" value="Eukaryota"/>
</dbReference>
<dbReference type="GeneTree" id="ENSGT00940000158995"/>
<dbReference type="HOGENOM" id="CLU_096532_0_0_1"/>
<dbReference type="InParanoid" id="Q5I0I2"/>
<dbReference type="PhylomeDB" id="Q5I0I2"/>
<dbReference type="TreeFam" id="TF319557"/>
<dbReference type="UniPathway" id="UPA00143"/>
<dbReference type="PRO" id="PR:Q5I0I2"/>
<dbReference type="Proteomes" id="UP000002494">
    <property type="component" value="Chromosome 7"/>
</dbReference>
<dbReference type="Bgee" id="ENSRNOG00000007769">
    <property type="expression patterns" value="Expressed in skeletal muscle tissue and 19 other cell types or tissues"/>
</dbReference>
<dbReference type="ExpressionAtlas" id="Q5I0I2">
    <property type="expression patterns" value="baseline and differential"/>
</dbReference>
<dbReference type="GO" id="GO:0005737">
    <property type="term" value="C:cytoplasm"/>
    <property type="evidence" value="ECO:0000250"/>
    <property type="project" value="UniProtKB"/>
</dbReference>
<dbReference type="GO" id="GO:0031410">
    <property type="term" value="C:cytoplasmic vesicle"/>
    <property type="evidence" value="ECO:0000250"/>
    <property type="project" value="UniProtKB"/>
</dbReference>
<dbReference type="GO" id="GO:0005829">
    <property type="term" value="C:cytosol"/>
    <property type="evidence" value="ECO:0007669"/>
    <property type="project" value="Ensembl"/>
</dbReference>
<dbReference type="GO" id="GO:0005783">
    <property type="term" value="C:endoplasmic reticulum"/>
    <property type="evidence" value="ECO:0000250"/>
    <property type="project" value="UniProtKB"/>
</dbReference>
<dbReference type="GO" id="GO:0005789">
    <property type="term" value="C:endoplasmic reticulum membrane"/>
    <property type="evidence" value="ECO:0007669"/>
    <property type="project" value="UniProtKB-SubCell"/>
</dbReference>
<dbReference type="GO" id="GO:0010008">
    <property type="term" value="C:endosome membrane"/>
    <property type="evidence" value="ECO:0007669"/>
    <property type="project" value="UniProtKB-SubCell"/>
</dbReference>
<dbReference type="GO" id="GO:0000139">
    <property type="term" value="C:Golgi membrane"/>
    <property type="evidence" value="ECO:0000266"/>
    <property type="project" value="RGD"/>
</dbReference>
<dbReference type="GO" id="GO:0005765">
    <property type="term" value="C:lysosomal membrane"/>
    <property type="evidence" value="ECO:0007669"/>
    <property type="project" value="UniProtKB-SubCell"/>
</dbReference>
<dbReference type="GO" id="GO:0005886">
    <property type="term" value="C:plasma membrane"/>
    <property type="evidence" value="ECO:0000250"/>
    <property type="project" value="UniProtKB"/>
</dbReference>
<dbReference type="GO" id="GO:0061630">
    <property type="term" value="F:ubiquitin protein ligase activity"/>
    <property type="evidence" value="ECO:0000250"/>
    <property type="project" value="UniProtKB"/>
</dbReference>
<dbReference type="GO" id="GO:0004842">
    <property type="term" value="F:ubiquitin-protein transferase activity"/>
    <property type="evidence" value="ECO:0000318"/>
    <property type="project" value="GO_Central"/>
</dbReference>
<dbReference type="GO" id="GO:0008270">
    <property type="term" value="F:zinc ion binding"/>
    <property type="evidence" value="ECO:0007669"/>
    <property type="project" value="UniProtKB-KW"/>
</dbReference>
<dbReference type="GO" id="GO:0140367">
    <property type="term" value="P:antibacterial innate immune response"/>
    <property type="evidence" value="ECO:0000250"/>
    <property type="project" value="UniProtKB"/>
</dbReference>
<dbReference type="GO" id="GO:0140374">
    <property type="term" value="P:antiviral innate immune response"/>
    <property type="evidence" value="ECO:0000250"/>
    <property type="project" value="UniProtKB"/>
</dbReference>
<dbReference type="GO" id="GO:0006897">
    <property type="term" value="P:endocytosis"/>
    <property type="evidence" value="ECO:0007669"/>
    <property type="project" value="UniProtKB-KW"/>
</dbReference>
<dbReference type="GO" id="GO:1905167">
    <property type="term" value="P:positive regulation of lysosomal protein catabolic process"/>
    <property type="evidence" value="ECO:0000266"/>
    <property type="project" value="RGD"/>
</dbReference>
<dbReference type="GO" id="GO:0016567">
    <property type="term" value="P:protein ubiquitination"/>
    <property type="evidence" value="ECO:0000250"/>
    <property type="project" value="UniProtKB"/>
</dbReference>
<dbReference type="GO" id="GO:0044790">
    <property type="term" value="P:suppression of viral release by host"/>
    <property type="evidence" value="ECO:0000266"/>
    <property type="project" value="RGD"/>
</dbReference>
<dbReference type="CDD" id="cd16808">
    <property type="entry name" value="RING_CH-C4HC3_MARCH2"/>
    <property type="match status" value="1"/>
</dbReference>
<dbReference type="FunFam" id="3.30.40.10:FF:000119">
    <property type="entry name" value="E3 ubiquitin-protein ligase MARCH2"/>
    <property type="match status" value="1"/>
</dbReference>
<dbReference type="Gene3D" id="3.30.40.10">
    <property type="entry name" value="Zinc/RING finger domain, C3HC4 (zinc finger)"/>
    <property type="match status" value="1"/>
</dbReference>
<dbReference type="InterPro" id="IPR001841">
    <property type="entry name" value="Znf_RING"/>
</dbReference>
<dbReference type="InterPro" id="IPR011016">
    <property type="entry name" value="Znf_RING-CH"/>
</dbReference>
<dbReference type="InterPro" id="IPR013083">
    <property type="entry name" value="Znf_RING/FYVE/PHD"/>
</dbReference>
<dbReference type="PANTHER" id="PTHR46065">
    <property type="entry name" value="E3 UBIQUITIN-PROTEIN LIGASE MARCH 2/3 FAMILY MEMBER"/>
    <property type="match status" value="1"/>
</dbReference>
<dbReference type="PANTHER" id="PTHR46065:SF4">
    <property type="entry name" value="E3 UBIQUITIN-PROTEIN LIGASE MARCHF2"/>
    <property type="match status" value="1"/>
</dbReference>
<dbReference type="Pfam" id="PF12906">
    <property type="entry name" value="RINGv"/>
    <property type="match status" value="1"/>
</dbReference>
<dbReference type="SMART" id="SM00744">
    <property type="entry name" value="RINGv"/>
    <property type="match status" value="1"/>
</dbReference>
<dbReference type="SUPFAM" id="SSF57850">
    <property type="entry name" value="RING/U-box"/>
    <property type="match status" value="1"/>
</dbReference>
<dbReference type="PROSITE" id="PS51292">
    <property type="entry name" value="ZF_RING_CH"/>
    <property type="match status" value="1"/>
</dbReference>
<gene>
    <name type="primary">Marchf2</name>
    <name type="synonym">March2</name>
    <name type="synonym">Rnf172</name>
</gene>
<protein>
    <recommendedName>
        <fullName>E3 ubiquitin-protein ligase MARCHF2</fullName>
        <ecNumber evidence="1">2.3.2.27</ecNumber>
    </recommendedName>
    <alternativeName>
        <fullName>Membrane-associated RING finger protein 2</fullName>
    </alternativeName>
    <alternativeName>
        <fullName>Membrane-associated RING-CH protein II</fullName>
        <shortName>MARCH-II</shortName>
    </alternativeName>
    <alternativeName>
        <fullName evidence="1">RING finger protein 172</fullName>
        <shortName>RNF172</shortName>
    </alternativeName>
    <alternativeName>
        <fullName evidence="6">RING-type E3 ubiquitin transferase MARCHF2</fullName>
    </alternativeName>
</protein>
<comment type="function">
    <text evidence="1 4">E3 ubiquitin-protein ligase that may mediate ubiquitination of TFRC and CD86, and promote their subsequent endocytosis and sorting to lysosomes via multivesicular bodies. E3 ubiquitin ligases accept ubiquitin from an E2 ubiquitin-conjugating enzyme in the form of a thioester and then directly transfer the ubiquitin to targeted substrates. Together with GOPC/CAL mediates the ubiquitination and lysosomal degradation of CFTR (By similarity). Ubiquitinates and therefore mediates the degradation of DLG1 (By similarity). Regulates the intracellular trafficking and secretion of alpha1-antitrypsin/SERPINA1 and HP/haptoglobin via ubiquitination and degradation of the cargo receptor ERGIC3 (By similarity). Negatively regulates the antiviral and antibacterial immune response by repression of the NF-kB and type 1 IFN signaling pathways, via MARCHF2-mediated K48-linked polyubiquitination of IKBKG/NEMO, resulting in its proteasomal degradation (By similarity). May be involved in endosomal trafficking through interaction with STX6.</text>
</comment>
<comment type="catalytic activity">
    <reaction evidence="1">
        <text>S-ubiquitinyl-[E2 ubiquitin-conjugating enzyme]-L-cysteine + [acceptor protein]-L-lysine = [E2 ubiquitin-conjugating enzyme]-L-cysteine + N(6)-ubiquitinyl-[acceptor protein]-L-lysine.</text>
        <dbReference type="EC" id="2.3.2.27"/>
    </reaction>
</comment>
<comment type="pathway">
    <text evidence="1">Protein modification; protein ubiquitination.</text>
</comment>
<comment type="subunit">
    <text evidence="1 4 5">Interacts with STX6; the interaction promotes MARCHF2-mediated ubiquitination and degradation of CFTR (PubMed:15689499). Interacts with MARCHF3 (PubMed:16428329). Interacts with GOPC/CAL; the interaction leads to CFTR ubiquitination and degradation (By similarity). Interacts with CFTR; the interaction leads to CFTR ubiqtuitination and degradation (By similarity). Interacts (via PDZ domain) with DLG1 (via PDZ domains); the interaction leads to DLG1 ubiqtuitination and degradation (By similarity). Interacts with ERGIC3 (By similarity). Interacts with ADRB2 (By similarity). Interacts with IKBKG/NEMO; during the late stages of macrophage viral and bacterial infection; the interaction leads to ubiquitination and degradation of IKBKG/NEMO (By similarity).</text>
</comment>
<comment type="subcellular location">
    <subcellularLocation>
        <location evidence="4">Endoplasmic reticulum membrane</location>
        <topology evidence="4">Multi-pass membrane protein</topology>
    </subcellularLocation>
    <subcellularLocation>
        <location evidence="1">Lysosome membrane</location>
        <topology evidence="2">Multi-pass membrane protein</topology>
    </subcellularLocation>
    <subcellularLocation>
        <location evidence="4">Endosome membrane</location>
        <topology evidence="4">Multi-pass membrane protein</topology>
    </subcellularLocation>
    <subcellularLocation>
        <location evidence="1">Golgi apparatus membrane</location>
        <topology evidence="2">Multi-pass membrane protein</topology>
    </subcellularLocation>
    <subcellularLocation>
        <location evidence="1">Cytoplasm</location>
    </subcellularLocation>
    <subcellularLocation>
        <location evidence="1">Cell membrane</location>
        <topology evidence="2">Multi-pass membrane protein</topology>
    </subcellularLocation>
</comment>
<comment type="tissue specificity">
    <text evidence="4">Ubiquitously expressed. Present in liver (at protein level).</text>
</comment>
<comment type="domain">
    <text evidence="3">The RING-CH-type zinc finger domain is required for E3 ligase activity.</text>
</comment>
<evidence type="ECO:0000250" key="1">
    <source>
        <dbReference type="UniProtKB" id="Q9P0N8"/>
    </source>
</evidence>
<evidence type="ECO:0000255" key="2"/>
<evidence type="ECO:0000255" key="3">
    <source>
        <dbReference type="PROSITE-ProRule" id="PRU00623"/>
    </source>
</evidence>
<evidence type="ECO:0000269" key="4">
    <source>
    </source>
</evidence>
<evidence type="ECO:0000269" key="5">
    <source>
    </source>
</evidence>
<evidence type="ECO:0000305" key="6"/>
<feature type="chain" id="PRO_0000274503" description="E3 ubiquitin-protein ligase MARCHF2">
    <location>
        <begin position="1"/>
        <end position="246"/>
    </location>
</feature>
<feature type="transmembrane region" description="Helical" evidence="2">
    <location>
        <begin position="138"/>
        <end position="158"/>
    </location>
</feature>
<feature type="transmembrane region" description="Helical" evidence="2">
    <location>
        <begin position="175"/>
        <end position="195"/>
    </location>
</feature>
<feature type="zinc finger region" description="RING-CH-type" evidence="3">
    <location>
        <begin position="56"/>
        <end position="116"/>
    </location>
</feature>
<feature type="region of interest" description="Required for interaction with IKBKG" evidence="1">
    <location>
        <begin position="121"/>
        <end position="246"/>
    </location>
</feature>
<feature type="binding site" evidence="3">
    <location>
        <position position="64"/>
    </location>
    <ligand>
        <name>Zn(2+)</name>
        <dbReference type="ChEBI" id="CHEBI:29105"/>
        <label>1</label>
    </ligand>
</feature>
<feature type="binding site" evidence="3">
    <location>
        <position position="67"/>
    </location>
    <ligand>
        <name>Zn(2+)</name>
        <dbReference type="ChEBI" id="CHEBI:29105"/>
        <label>1</label>
    </ligand>
</feature>
<feature type="binding site" evidence="3">
    <location>
        <position position="80"/>
    </location>
    <ligand>
        <name>Zn(2+)</name>
        <dbReference type="ChEBI" id="CHEBI:29105"/>
        <label>2</label>
    </ligand>
</feature>
<feature type="binding site" evidence="3">
    <location>
        <position position="82"/>
    </location>
    <ligand>
        <name>Zn(2+)</name>
        <dbReference type="ChEBI" id="CHEBI:29105"/>
        <label>2</label>
    </ligand>
</feature>
<feature type="binding site" evidence="3">
    <location>
        <position position="90"/>
    </location>
    <ligand>
        <name>Zn(2+)</name>
        <dbReference type="ChEBI" id="CHEBI:29105"/>
        <label>1</label>
    </ligand>
</feature>
<feature type="binding site" evidence="3">
    <location>
        <position position="93"/>
    </location>
    <ligand>
        <name>Zn(2+)</name>
        <dbReference type="ChEBI" id="CHEBI:29105"/>
        <label>1</label>
    </ligand>
</feature>
<feature type="binding site" evidence="3">
    <location>
        <position position="106"/>
    </location>
    <ligand>
        <name>Zn(2+)</name>
        <dbReference type="ChEBI" id="CHEBI:29105"/>
        <label>2</label>
    </ligand>
</feature>
<feature type="binding site" evidence="3">
    <location>
        <position position="109"/>
    </location>
    <ligand>
        <name>Zn(2+)</name>
        <dbReference type="ChEBI" id="CHEBI:29105"/>
        <label>2</label>
    </ligand>
</feature>
<organism>
    <name type="scientific">Rattus norvegicus</name>
    <name type="common">Rat</name>
    <dbReference type="NCBI Taxonomy" id="10116"/>
    <lineage>
        <taxon>Eukaryota</taxon>
        <taxon>Metazoa</taxon>
        <taxon>Chordata</taxon>
        <taxon>Craniata</taxon>
        <taxon>Vertebrata</taxon>
        <taxon>Euteleostomi</taxon>
        <taxon>Mammalia</taxon>
        <taxon>Eutheria</taxon>
        <taxon>Euarchontoglires</taxon>
        <taxon>Glires</taxon>
        <taxon>Rodentia</taxon>
        <taxon>Myomorpha</taxon>
        <taxon>Muroidea</taxon>
        <taxon>Muridae</taxon>
        <taxon>Murinae</taxon>
        <taxon>Rattus</taxon>
    </lineage>
</organism>
<reference key="1">
    <citation type="journal article" date="2005" name="Mol. Biol. Cell">
        <title>MARCH-II is a syntaxin-6-binding protein involved in endosomal trafficking.</title>
        <authorList>
            <person name="Nakamura N."/>
            <person name="Fukuda H."/>
            <person name="Kato A."/>
            <person name="Hirose S."/>
        </authorList>
    </citation>
    <scope>NUCLEOTIDE SEQUENCE [MRNA]</scope>
    <scope>TISSUE SPECIFICITY</scope>
    <scope>SUBCELLULAR LOCATION</scope>
    <scope>INTERACTION WITH STX6</scope>
    <scope>FUNCTION</scope>
    <source>
        <tissue>Small intestine</tissue>
    </source>
</reference>
<reference key="2">
    <citation type="journal article" date="2004" name="Genome Res.">
        <title>The status, quality, and expansion of the NIH full-length cDNA project: the Mammalian Gene Collection (MGC).</title>
        <authorList>
            <consortium name="The MGC Project Team"/>
        </authorList>
    </citation>
    <scope>NUCLEOTIDE SEQUENCE [LARGE SCALE MRNA]</scope>
    <source>
        <tissue>Thymus</tissue>
    </source>
</reference>
<reference key="3">
    <citation type="journal article" date="2006" name="J. Biochem.">
        <title>MARCH-III is a novel component of endosomes with properties similar to those of MARCH-II.</title>
        <authorList>
            <person name="Fukuda H."/>
            <person name="Nakamura N."/>
            <person name="Hirose S."/>
        </authorList>
    </citation>
    <scope>INTERACTION WITH MARCHF3</scope>
</reference>